<reference key="1">
    <citation type="journal article" date="2003" name="Proc. Natl. Acad. Sci. U.S.A.">
        <title>The genome sequence of Blochmannia floridanus: comparative analysis of reduced genomes.</title>
        <authorList>
            <person name="Gil R."/>
            <person name="Silva F.J."/>
            <person name="Zientz E."/>
            <person name="Delmotte F."/>
            <person name="Gonzalez-Candelas F."/>
            <person name="Latorre A."/>
            <person name="Rausell C."/>
            <person name="Kamerbeek J."/>
            <person name="Gadau J."/>
            <person name="Hoelldobler B."/>
            <person name="van Ham R.C.H.J."/>
            <person name="Gross R."/>
            <person name="Moya A."/>
        </authorList>
    </citation>
    <scope>NUCLEOTIDE SEQUENCE [LARGE SCALE GENOMIC DNA]</scope>
</reference>
<dbReference type="EC" id="3.6.5.3" evidence="2"/>
<dbReference type="EMBL" id="BX248583">
    <property type="protein sequence ID" value="CAD83246.1"/>
    <property type="molecule type" value="Genomic_DNA"/>
</dbReference>
<dbReference type="SMR" id="Q7VRP0"/>
<dbReference type="STRING" id="203907.Bfl564"/>
<dbReference type="KEGG" id="bfl:Bfl564"/>
<dbReference type="eggNOG" id="COG0050">
    <property type="taxonomic scope" value="Bacteria"/>
</dbReference>
<dbReference type="HOGENOM" id="CLU_007265_0_2_6"/>
<dbReference type="OrthoDB" id="9803139at2"/>
<dbReference type="Proteomes" id="UP000002192">
    <property type="component" value="Chromosome"/>
</dbReference>
<dbReference type="GO" id="GO:0005829">
    <property type="term" value="C:cytosol"/>
    <property type="evidence" value="ECO:0007669"/>
    <property type="project" value="TreeGrafter"/>
</dbReference>
<dbReference type="GO" id="GO:0005525">
    <property type="term" value="F:GTP binding"/>
    <property type="evidence" value="ECO:0007669"/>
    <property type="project" value="UniProtKB-UniRule"/>
</dbReference>
<dbReference type="GO" id="GO:0003924">
    <property type="term" value="F:GTPase activity"/>
    <property type="evidence" value="ECO:0007669"/>
    <property type="project" value="InterPro"/>
</dbReference>
<dbReference type="GO" id="GO:0097216">
    <property type="term" value="F:guanosine tetraphosphate binding"/>
    <property type="evidence" value="ECO:0007669"/>
    <property type="project" value="UniProtKB-ARBA"/>
</dbReference>
<dbReference type="GO" id="GO:0003746">
    <property type="term" value="F:translation elongation factor activity"/>
    <property type="evidence" value="ECO:0007669"/>
    <property type="project" value="UniProtKB-UniRule"/>
</dbReference>
<dbReference type="CDD" id="cd01884">
    <property type="entry name" value="EF_Tu"/>
    <property type="match status" value="1"/>
</dbReference>
<dbReference type="CDD" id="cd03697">
    <property type="entry name" value="EFTU_II"/>
    <property type="match status" value="1"/>
</dbReference>
<dbReference type="CDD" id="cd03707">
    <property type="entry name" value="EFTU_III"/>
    <property type="match status" value="1"/>
</dbReference>
<dbReference type="FunFam" id="2.40.30.10:FF:000001">
    <property type="entry name" value="Elongation factor Tu"/>
    <property type="match status" value="1"/>
</dbReference>
<dbReference type="FunFam" id="3.40.50.300:FF:000003">
    <property type="entry name" value="Elongation factor Tu"/>
    <property type="match status" value="1"/>
</dbReference>
<dbReference type="Gene3D" id="3.40.50.300">
    <property type="entry name" value="P-loop containing nucleotide triphosphate hydrolases"/>
    <property type="match status" value="1"/>
</dbReference>
<dbReference type="Gene3D" id="2.40.30.10">
    <property type="entry name" value="Translation factors"/>
    <property type="match status" value="2"/>
</dbReference>
<dbReference type="HAMAP" id="MF_00118_B">
    <property type="entry name" value="EF_Tu_B"/>
    <property type="match status" value="1"/>
</dbReference>
<dbReference type="InterPro" id="IPR041709">
    <property type="entry name" value="EF-Tu_GTP-bd"/>
</dbReference>
<dbReference type="InterPro" id="IPR050055">
    <property type="entry name" value="EF-Tu_GTPase"/>
</dbReference>
<dbReference type="InterPro" id="IPR004161">
    <property type="entry name" value="EFTu-like_2"/>
</dbReference>
<dbReference type="InterPro" id="IPR033720">
    <property type="entry name" value="EFTU_2"/>
</dbReference>
<dbReference type="InterPro" id="IPR031157">
    <property type="entry name" value="G_TR_CS"/>
</dbReference>
<dbReference type="InterPro" id="IPR027417">
    <property type="entry name" value="P-loop_NTPase"/>
</dbReference>
<dbReference type="InterPro" id="IPR005225">
    <property type="entry name" value="Small_GTP-bd"/>
</dbReference>
<dbReference type="InterPro" id="IPR000795">
    <property type="entry name" value="T_Tr_GTP-bd_dom"/>
</dbReference>
<dbReference type="InterPro" id="IPR009000">
    <property type="entry name" value="Transl_B-barrel_sf"/>
</dbReference>
<dbReference type="InterPro" id="IPR009001">
    <property type="entry name" value="Transl_elong_EF1A/Init_IF2_C"/>
</dbReference>
<dbReference type="InterPro" id="IPR004541">
    <property type="entry name" value="Transl_elong_EFTu/EF1A_bac/org"/>
</dbReference>
<dbReference type="InterPro" id="IPR004160">
    <property type="entry name" value="Transl_elong_EFTu/EF1A_C"/>
</dbReference>
<dbReference type="NCBIfam" id="TIGR00485">
    <property type="entry name" value="EF-Tu"/>
    <property type="match status" value="1"/>
</dbReference>
<dbReference type="NCBIfam" id="NF000766">
    <property type="entry name" value="PRK00049.1"/>
    <property type="match status" value="1"/>
</dbReference>
<dbReference type="NCBIfam" id="NF009372">
    <property type="entry name" value="PRK12735.1"/>
    <property type="match status" value="1"/>
</dbReference>
<dbReference type="NCBIfam" id="NF009373">
    <property type="entry name" value="PRK12736.1"/>
    <property type="match status" value="1"/>
</dbReference>
<dbReference type="NCBIfam" id="TIGR00231">
    <property type="entry name" value="small_GTP"/>
    <property type="match status" value="1"/>
</dbReference>
<dbReference type="PANTHER" id="PTHR43721:SF22">
    <property type="entry name" value="ELONGATION FACTOR TU, MITOCHONDRIAL"/>
    <property type="match status" value="1"/>
</dbReference>
<dbReference type="PANTHER" id="PTHR43721">
    <property type="entry name" value="ELONGATION FACTOR TU-RELATED"/>
    <property type="match status" value="1"/>
</dbReference>
<dbReference type="Pfam" id="PF00009">
    <property type="entry name" value="GTP_EFTU"/>
    <property type="match status" value="1"/>
</dbReference>
<dbReference type="Pfam" id="PF03144">
    <property type="entry name" value="GTP_EFTU_D2"/>
    <property type="match status" value="1"/>
</dbReference>
<dbReference type="Pfam" id="PF03143">
    <property type="entry name" value="GTP_EFTU_D3"/>
    <property type="match status" value="1"/>
</dbReference>
<dbReference type="PRINTS" id="PR00315">
    <property type="entry name" value="ELONGATNFCT"/>
</dbReference>
<dbReference type="SUPFAM" id="SSF50465">
    <property type="entry name" value="EF-Tu/eEF-1alpha/eIF2-gamma C-terminal domain"/>
    <property type="match status" value="1"/>
</dbReference>
<dbReference type="SUPFAM" id="SSF52540">
    <property type="entry name" value="P-loop containing nucleoside triphosphate hydrolases"/>
    <property type="match status" value="1"/>
</dbReference>
<dbReference type="SUPFAM" id="SSF50447">
    <property type="entry name" value="Translation proteins"/>
    <property type="match status" value="1"/>
</dbReference>
<dbReference type="PROSITE" id="PS00301">
    <property type="entry name" value="G_TR_1"/>
    <property type="match status" value="1"/>
</dbReference>
<dbReference type="PROSITE" id="PS51722">
    <property type="entry name" value="G_TR_2"/>
    <property type="match status" value="1"/>
</dbReference>
<sequence>MSKEKFQRIRTHINVGTIGHVDHGKTTLTAAITTVLSKKYGGCARAFDQIDNAPEEKARGITINTSHVEYDTEFRHYAHVDCPGHADYVKNMITGAAQMDGAILVVAATDGPMPQTREHILLARQVGVPHIVVFLNKCDMVDDLELLELVEMEVRELLSQYDFPGDSAPIIQGSALKALEGDEKWSSKVLELSSILDNYIPEPKRSIDKPFLLPIEDVFSISGRGTVVTGRVESGIIKVGEEVEIVGIKDTVKTTCTGIEMFRKLLDEGRAGENVGVLLRGTKRDEVERGQVLSKPGCIKPHSNFESEVYILNKDEGGRHTPFFKGYRPQFYFRTTDVTGTIELPKEVEMVMPGDNIKMVVHLISPIAMDDGLRFAIREGGRTVGAGVVSRVIS</sequence>
<feature type="chain" id="PRO_1000015617" description="Elongation factor Tu">
    <location>
        <begin position="1"/>
        <end position="394"/>
    </location>
</feature>
<feature type="domain" description="tr-type G">
    <location>
        <begin position="10"/>
        <end position="204"/>
    </location>
</feature>
<feature type="region of interest" description="G1" evidence="1">
    <location>
        <begin position="19"/>
        <end position="26"/>
    </location>
</feature>
<feature type="region of interest" description="G2" evidence="1">
    <location>
        <begin position="60"/>
        <end position="64"/>
    </location>
</feature>
<feature type="region of interest" description="G3" evidence="1">
    <location>
        <begin position="81"/>
        <end position="84"/>
    </location>
</feature>
<feature type="region of interest" description="G4" evidence="1">
    <location>
        <begin position="136"/>
        <end position="139"/>
    </location>
</feature>
<feature type="region of interest" description="G5" evidence="1">
    <location>
        <begin position="174"/>
        <end position="176"/>
    </location>
</feature>
<feature type="binding site" evidence="2">
    <location>
        <begin position="19"/>
        <end position="26"/>
    </location>
    <ligand>
        <name>GTP</name>
        <dbReference type="ChEBI" id="CHEBI:37565"/>
    </ligand>
</feature>
<feature type="binding site" evidence="2">
    <location>
        <position position="26"/>
    </location>
    <ligand>
        <name>Mg(2+)</name>
        <dbReference type="ChEBI" id="CHEBI:18420"/>
    </ligand>
</feature>
<feature type="binding site" evidence="2">
    <location>
        <begin position="81"/>
        <end position="85"/>
    </location>
    <ligand>
        <name>GTP</name>
        <dbReference type="ChEBI" id="CHEBI:37565"/>
    </ligand>
</feature>
<feature type="binding site" evidence="2">
    <location>
        <begin position="136"/>
        <end position="139"/>
    </location>
    <ligand>
        <name>GTP</name>
        <dbReference type="ChEBI" id="CHEBI:37565"/>
    </ligand>
</feature>
<comment type="function">
    <text evidence="2">GTP hydrolase that promotes the GTP-dependent binding of aminoacyl-tRNA to the A-site of ribosomes during protein biosynthesis.</text>
</comment>
<comment type="catalytic activity">
    <reaction evidence="2">
        <text>GTP + H2O = GDP + phosphate + H(+)</text>
        <dbReference type="Rhea" id="RHEA:19669"/>
        <dbReference type="ChEBI" id="CHEBI:15377"/>
        <dbReference type="ChEBI" id="CHEBI:15378"/>
        <dbReference type="ChEBI" id="CHEBI:37565"/>
        <dbReference type="ChEBI" id="CHEBI:43474"/>
        <dbReference type="ChEBI" id="CHEBI:58189"/>
        <dbReference type="EC" id="3.6.5.3"/>
    </reaction>
    <physiologicalReaction direction="left-to-right" evidence="2">
        <dbReference type="Rhea" id="RHEA:19670"/>
    </physiologicalReaction>
</comment>
<comment type="subunit">
    <text evidence="2">Monomer.</text>
</comment>
<comment type="subcellular location">
    <subcellularLocation>
        <location evidence="2">Cytoplasm</location>
    </subcellularLocation>
</comment>
<comment type="similarity">
    <text evidence="2">Belongs to the TRAFAC class translation factor GTPase superfamily. Classic translation factor GTPase family. EF-Tu/EF-1A subfamily.</text>
</comment>
<organism>
    <name type="scientific">Blochmanniella floridana</name>
    <dbReference type="NCBI Taxonomy" id="203907"/>
    <lineage>
        <taxon>Bacteria</taxon>
        <taxon>Pseudomonadati</taxon>
        <taxon>Pseudomonadota</taxon>
        <taxon>Gammaproteobacteria</taxon>
        <taxon>Enterobacterales</taxon>
        <taxon>Enterobacteriaceae</taxon>
        <taxon>ant endosymbionts</taxon>
        <taxon>Candidatus Blochmanniella</taxon>
    </lineage>
</organism>
<protein>
    <recommendedName>
        <fullName evidence="2">Elongation factor Tu</fullName>
        <shortName evidence="2">EF-Tu</shortName>
        <ecNumber evidence="2">3.6.5.3</ecNumber>
    </recommendedName>
</protein>
<accession>Q7VRP0</accession>
<evidence type="ECO:0000250" key="1"/>
<evidence type="ECO:0000255" key="2">
    <source>
        <dbReference type="HAMAP-Rule" id="MF_00118"/>
    </source>
</evidence>
<gene>
    <name evidence="2" type="primary">tuf</name>
    <name type="ordered locus">Bfl564</name>
</gene>
<keyword id="KW-0963">Cytoplasm</keyword>
<keyword id="KW-0251">Elongation factor</keyword>
<keyword id="KW-0342">GTP-binding</keyword>
<keyword id="KW-0378">Hydrolase</keyword>
<keyword id="KW-0460">Magnesium</keyword>
<keyword id="KW-0479">Metal-binding</keyword>
<keyword id="KW-0547">Nucleotide-binding</keyword>
<keyword id="KW-0648">Protein biosynthesis</keyword>
<keyword id="KW-1185">Reference proteome</keyword>
<name>EFTU_BLOFL</name>
<proteinExistence type="inferred from homology"/>